<accession>O82677</accession>
<evidence type="ECO:0000250" key="1"/>
<evidence type="ECO:0000256" key="2">
    <source>
        <dbReference type="SAM" id="MobiDB-lite"/>
    </source>
</evidence>
<evidence type="ECO:0000305" key="3"/>
<gene>
    <name type="primary">RB</name>
</gene>
<name>RBR_OXYRB</name>
<dbReference type="EMBL" id="AJ011681">
    <property type="protein sequence ID" value="CAA09736.1"/>
    <property type="molecule type" value="mRNA"/>
</dbReference>
<dbReference type="PIR" id="T43054">
    <property type="entry name" value="T43054"/>
</dbReference>
<dbReference type="SMR" id="O82677"/>
<dbReference type="GO" id="GO:0000785">
    <property type="term" value="C:chromatin"/>
    <property type="evidence" value="ECO:0007669"/>
    <property type="project" value="TreeGrafter"/>
</dbReference>
<dbReference type="GO" id="GO:0005634">
    <property type="term" value="C:nucleus"/>
    <property type="evidence" value="ECO:0007669"/>
    <property type="project" value="UniProtKB-SubCell"/>
</dbReference>
<dbReference type="GO" id="GO:0005667">
    <property type="term" value="C:transcription regulator complex"/>
    <property type="evidence" value="ECO:0007669"/>
    <property type="project" value="TreeGrafter"/>
</dbReference>
<dbReference type="GO" id="GO:0000977">
    <property type="term" value="F:RNA polymerase II transcription regulatory region sequence-specific DNA binding"/>
    <property type="evidence" value="ECO:0007669"/>
    <property type="project" value="TreeGrafter"/>
</dbReference>
<dbReference type="GO" id="GO:0030154">
    <property type="term" value="P:cell differentiation"/>
    <property type="evidence" value="ECO:0007669"/>
    <property type="project" value="TreeGrafter"/>
</dbReference>
<dbReference type="GO" id="GO:2000134">
    <property type="term" value="P:negative regulation of G1/S transition of mitotic cell cycle"/>
    <property type="evidence" value="ECO:0007669"/>
    <property type="project" value="TreeGrafter"/>
</dbReference>
<dbReference type="GO" id="GO:0006357">
    <property type="term" value="P:regulation of transcription by RNA polymerase II"/>
    <property type="evidence" value="ECO:0007669"/>
    <property type="project" value="InterPro"/>
</dbReference>
<dbReference type="FunFam" id="1.10.472.10:FF:000030">
    <property type="entry name" value="Retinoblastoma-related protein 1"/>
    <property type="match status" value="1"/>
</dbReference>
<dbReference type="FunFam" id="1.10.472.10:FF:000067">
    <property type="entry name" value="Retinoblastoma-related protein 1"/>
    <property type="match status" value="1"/>
</dbReference>
<dbReference type="FunFam" id="1.10.472.140:FF:000003">
    <property type="entry name" value="Retinoblastoma-related protein 1"/>
    <property type="match status" value="1"/>
</dbReference>
<dbReference type="Gene3D" id="1.10.472.140">
    <property type="match status" value="1"/>
</dbReference>
<dbReference type="Gene3D" id="1.10.472.10">
    <property type="entry name" value="Cyclin-like"/>
    <property type="match status" value="2"/>
</dbReference>
<dbReference type="InterPro" id="IPR036915">
    <property type="entry name" value="Cyclin-like_sf"/>
</dbReference>
<dbReference type="InterPro" id="IPR002720">
    <property type="entry name" value="RB_A"/>
</dbReference>
<dbReference type="InterPro" id="IPR002719">
    <property type="entry name" value="RB_B"/>
</dbReference>
<dbReference type="InterPro" id="IPR028309">
    <property type="entry name" value="RB_fam"/>
</dbReference>
<dbReference type="InterPro" id="IPR024599">
    <property type="entry name" value="RB_N"/>
</dbReference>
<dbReference type="PANTHER" id="PTHR13742:SF17">
    <property type="entry name" value="RE32990P-RELATED"/>
    <property type="match status" value="1"/>
</dbReference>
<dbReference type="PANTHER" id="PTHR13742">
    <property type="entry name" value="RETINOBLASTOMA-ASSOCIATED PROTEIN RB -RELATED"/>
    <property type="match status" value="1"/>
</dbReference>
<dbReference type="Pfam" id="PF11934">
    <property type="entry name" value="DUF3452"/>
    <property type="match status" value="1"/>
</dbReference>
<dbReference type="Pfam" id="PF01858">
    <property type="entry name" value="RB_A"/>
    <property type="match status" value="1"/>
</dbReference>
<dbReference type="Pfam" id="PF01857">
    <property type="entry name" value="RB_B"/>
    <property type="match status" value="1"/>
</dbReference>
<dbReference type="SMART" id="SM01367">
    <property type="entry name" value="DUF3452"/>
    <property type="match status" value="1"/>
</dbReference>
<dbReference type="SMART" id="SM01368">
    <property type="entry name" value="RB_A"/>
    <property type="match status" value="1"/>
</dbReference>
<dbReference type="SUPFAM" id="SSF47954">
    <property type="entry name" value="Cyclin-like"/>
    <property type="match status" value="2"/>
</dbReference>
<organism>
    <name type="scientific">Oxybasis rubra</name>
    <name type="common">Red goosefoot</name>
    <name type="synonym">Chenopodium rubrum</name>
    <dbReference type="NCBI Taxonomy" id="3560"/>
    <lineage>
        <taxon>Eukaryota</taxon>
        <taxon>Viridiplantae</taxon>
        <taxon>Streptophyta</taxon>
        <taxon>Embryophyta</taxon>
        <taxon>Tracheophyta</taxon>
        <taxon>Spermatophyta</taxon>
        <taxon>Magnoliopsida</taxon>
        <taxon>eudicotyledons</taxon>
        <taxon>Gunneridae</taxon>
        <taxon>Pentapetalae</taxon>
        <taxon>Caryophyllales</taxon>
        <taxon>Chenopodiaceae</taxon>
        <taxon>Chenopodioideae</taxon>
        <taxon>Atripliceae</taxon>
        <taxon>Oxybasis</taxon>
    </lineage>
</organism>
<keyword id="KW-0131">Cell cycle</keyword>
<keyword id="KW-0539">Nucleus</keyword>
<keyword id="KW-0678">Repressor</keyword>
<keyword id="KW-0804">Transcription</keyword>
<keyword id="KW-0805">Transcription regulation</keyword>
<feature type="chain" id="PRO_0000380231" description="Retinoblastoma-related protein">
    <location>
        <begin position="1"/>
        <end position="1012"/>
    </location>
</feature>
<feature type="region of interest" description="Pocket" evidence="1">
    <location>
        <begin position="403"/>
        <end position="863"/>
    </location>
</feature>
<feature type="region of interest" description="Domain A" evidence="1">
    <location>
        <begin position="403"/>
        <end position="604"/>
    </location>
</feature>
<feature type="region of interest" description="Spacer" evidence="1">
    <location>
        <begin position="605"/>
        <end position="723"/>
    </location>
</feature>
<feature type="region of interest" description="Domain B" evidence="1">
    <location>
        <begin position="724"/>
        <end position="863"/>
    </location>
</feature>
<feature type="region of interest" description="Disordered" evidence="2">
    <location>
        <begin position="884"/>
        <end position="905"/>
    </location>
</feature>
<reference key="1">
    <citation type="online journal article" date="1999" name="Plant Gene Register">
        <title>Isolation of a full-length cDNA encoding a retinoblastoma protein from suspension cultured photoautotrophic Chenopodium rubrum L. cells.</title>
        <authorList>
            <person name="Fountain M.D."/>
            <person name="Murray J.A.H."/>
            <person name="Beck E."/>
        </authorList>
        <locator>PGR99-003</locator>
    </citation>
    <scope>NUCLEOTIDE SEQUENCE [MRNA]</scope>
    <source>
        <tissue>Hypocotyl</tissue>
    </source>
</reference>
<proteinExistence type="evidence at transcript level"/>
<comment type="function">
    <text evidence="1">Regulator of biological processes that recruits a histone deacetylase to control gene transcription. May play a role in the entry into mitosis, negatively regulating the cell proliferation. Formation of stable complexes with geminiviridae replication-associated proteins may create a cellular environment which favors viral DNA replication (By similarity).</text>
</comment>
<comment type="subcellular location">
    <subcellularLocation>
        <location evidence="1">Nucleus</location>
    </subcellularLocation>
</comment>
<comment type="similarity">
    <text evidence="3">Belongs to the retinoblastoma protein (RB) family.</text>
</comment>
<protein>
    <recommendedName>
        <fullName>Retinoblastoma-related protein</fullName>
    </recommendedName>
</protein>
<sequence>MKMEDLFSLLPWLRDVPVQNQFSLDDKMYSDALKLFTESKSILSNNVSPIGSTTPEELERYMFAFILYASKRLGAKTTGDASEGSNQSGITLCQKLKAVKLNLVDFFKELPQFVVKIGPILSDMYGADWEKRLEAKELQANFVHLSLLSKYYKRAYQEFFKTNEVDKEVADPGTSSSDSISDYYRFGWLLFLALRVHAFSRFKDLVTCTNGIVSVLAILIIHIPARLRKFSALDLPLFEKKIDRGVNLVASLCQKYDTSEDEVKHMMEKANELILEILKKNPCSASLCKTENLENIDPDDLTYFEDLLEDSSLPNCISMLEKDYDAAIWNKGDIDERVFVNVDDSLLGSGSLSGGAINISGLREIRCNGLFNETIASPLSPCRSPALHVNGARGGVNIRMISTPVSTAMTTAKWLRTYISPLPSKPSPQLEKYLMSCDRNISSEVVRRAHIIMEAIFPNSALGERCIAGSLPNSNLTDNIWAQQRRLEALKLYYRVLETMCTAEAQLLHANNLTSLLTNERFHRCMLACSAELVLATHKTVTMLFPAVLEKTGITAFDLSKVIESFIRHEDSLPRELRRHLNSLEERLLESMAWEKGSSMDNSLIIARPALSAGINRFGLLAEPMPFLNAMAAHIEVSTGGLPPLPSSCKHEFAAGQNGDIRSPKRACTEYRSVLVERNSFTSPVKDRLINNLKQKLTPPALQSAFASPTRLSPGGGGETCAETGINIFFSKIVKLAAVRINGMIERLEKLEKQSQTQQLREQLRENVYCRFHIILNQRTSLFFNRHIDQIILCAFYGVAKISQYELTFKEIILNYRKQPQCKPQVFRSVFVDWSFSRRNRQGQDHVDIITFYNEVFIPSVKPLLGELGPQGACVKTDLIPESNNDKDGQCPGSPKLSTFPSLPDMSPKKVAKNVYVSPLRSSKMDALISNSSKSYYACVGESTHAFQSPSKDLTAINDRLNSTSKVRGALNFDTDAGLVSDSLVANSLYLQNGNCATTSSVGPLKTEQPDS</sequence>